<feature type="chain" id="PRO_0000369894" description="Serine hydroxymethyltransferase">
    <location>
        <begin position="1"/>
        <end position="414"/>
    </location>
</feature>
<feature type="binding site" evidence="1">
    <location>
        <position position="121"/>
    </location>
    <ligand>
        <name>(6S)-5,6,7,8-tetrahydrofolate</name>
        <dbReference type="ChEBI" id="CHEBI:57453"/>
    </ligand>
</feature>
<feature type="binding site" evidence="1">
    <location>
        <begin position="125"/>
        <end position="127"/>
    </location>
    <ligand>
        <name>(6S)-5,6,7,8-tetrahydrofolate</name>
        <dbReference type="ChEBI" id="CHEBI:57453"/>
    </ligand>
</feature>
<feature type="site" description="Plays an important role in substrate specificity" evidence="1">
    <location>
        <position position="229"/>
    </location>
</feature>
<feature type="modified residue" description="N6-(pyridoxal phosphate)lysine" evidence="1">
    <location>
        <position position="230"/>
    </location>
</feature>
<organism>
    <name type="scientific">Acidithiobacillus ferrooxidans (strain ATCC 23270 / DSM 14882 / CIP 104768 / NCIMB 8455)</name>
    <name type="common">Ferrobacillus ferrooxidans (strain ATCC 23270)</name>
    <dbReference type="NCBI Taxonomy" id="243159"/>
    <lineage>
        <taxon>Bacteria</taxon>
        <taxon>Pseudomonadati</taxon>
        <taxon>Pseudomonadota</taxon>
        <taxon>Acidithiobacillia</taxon>
        <taxon>Acidithiobacillales</taxon>
        <taxon>Acidithiobacillaceae</taxon>
        <taxon>Acidithiobacillus</taxon>
    </lineage>
</organism>
<accession>B7J439</accession>
<reference key="1">
    <citation type="journal article" date="2008" name="BMC Genomics">
        <title>Acidithiobacillus ferrooxidans metabolism: from genome sequence to industrial applications.</title>
        <authorList>
            <person name="Valdes J."/>
            <person name="Pedroso I."/>
            <person name="Quatrini R."/>
            <person name="Dodson R.J."/>
            <person name="Tettelin H."/>
            <person name="Blake R. II"/>
            <person name="Eisen J.A."/>
            <person name="Holmes D.S."/>
        </authorList>
    </citation>
    <scope>NUCLEOTIDE SEQUENCE [LARGE SCALE GENOMIC DNA]</scope>
    <source>
        <strain>ATCC 23270 / DSM 14882 / CIP 104768 / NCIMB 8455</strain>
    </source>
</reference>
<sequence>MFSKTLTIADFDPVLWDAMRKEARRQEDHVELIASENYASPMVMAAQGSVLTNKYAEGYPGKRYYGGCEYVDIAEQLAMDRALELFGAEHANVQAHSGSQANQAVYLSVLQPGDKIMGMSLAHGGHLTHGAKVNVSGKLFQVAAYGVRAEDGRIDYDAMAEQAERERPKMIVAGASAYSRVIDFARIGEIARSIGAYLLVDMAHIAGLVATGLHPSPVPHADFVTTTTHKTLRGPRGGLILCREQYAKKVNSLIFPGLQGGPLMHVIAAKAVAFREALQPEFKSYQQQVIHNAQTLSKVLAGRGYGAVSGGTDNHLFLLNLGEKVTGKEAEEALGQANITVNKNAVPFDIRPPAVTSGIRIGTPAATTRGFGEAEMHRLGNGIADVLDASSDAAVIERVRADMKALCHQFPVYG</sequence>
<comment type="function">
    <text evidence="1">Catalyzes the reversible interconversion of serine and glycine with tetrahydrofolate (THF) serving as the one-carbon carrier. This reaction serves as the major source of one-carbon groups required for the biosynthesis of purines, thymidylate, methionine, and other important biomolecules. Also exhibits THF-independent aldolase activity toward beta-hydroxyamino acids, producing glycine and aldehydes, via a retro-aldol mechanism.</text>
</comment>
<comment type="catalytic activity">
    <reaction evidence="1">
        <text>(6R)-5,10-methylene-5,6,7,8-tetrahydrofolate + glycine + H2O = (6S)-5,6,7,8-tetrahydrofolate + L-serine</text>
        <dbReference type="Rhea" id="RHEA:15481"/>
        <dbReference type="ChEBI" id="CHEBI:15377"/>
        <dbReference type="ChEBI" id="CHEBI:15636"/>
        <dbReference type="ChEBI" id="CHEBI:33384"/>
        <dbReference type="ChEBI" id="CHEBI:57305"/>
        <dbReference type="ChEBI" id="CHEBI:57453"/>
        <dbReference type="EC" id="2.1.2.1"/>
    </reaction>
</comment>
<comment type="cofactor">
    <cofactor evidence="1">
        <name>pyridoxal 5'-phosphate</name>
        <dbReference type="ChEBI" id="CHEBI:597326"/>
    </cofactor>
</comment>
<comment type="pathway">
    <text evidence="1">One-carbon metabolism; tetrahydrofolate interconversion.</text>
</comment>
<comment type="pathway">
    <text evidence="1">Amino-acid biosynthesis; glycine biosynthesis; glycine from L-serine: step 1/1.</text>
</comment>
<comment type="subunit">
    <text evidence="1">Homodimer.</text>
</comment>
<comment type="subcellular location">
    <subcellularLocation>
        <location evidence="1">Cytoplasm</location>
    </subcellularLocation>
</comment>
<comment type="similarity">
    <text evidence="1">Belongs to the SHMT family.</text>
</comment>
<proteinExistence type="inferred from homology"/>
<dbReference type="EC" id="2.1.2.1" evidence="1"/>
<dbReference type="EMBL" id="CP001219">
    <property type="protein sequence ID" value="ACK78912.1"/>
    <property type="molecule type" value="Genomic_DNA"/>
</dbReference>
<dbReference type="RefSeq" id="WP_012536070.1">
    <property type="nucleotide sequence ID" value="NC_011761.1"/>
</dbReference>
<dbReference type="SMR" id="B7J439"/>
<dbReference type="STRING" id="243159.AFE_0295"/>
<dbReference type="PaxDb" id="243159-AFE_0295"/>
<dbReference type="GeneID" id="65279676"/>
<dbReference type="KEGG" id="afr:AFE_0295"/>
<dbReference type="eggNOG" id="COG0112">
    <property type="taxonomic scope" value="Bacteria"/>
</dbReference>
<dbReference type="HOGENOM" id="CLU_022477_2_1_6"/>
<dbReference type="UniPathway" id="UPA00193"/>
<dbReference type="UniPathway" id="UPA00288">
    <property type="reaction ID" value="UER01023"/>
</dbReference>
<dbReference type="Proteomes" id="UP000001362">
    <property type="component" value="Chromosome"/>
</dbReference>
<dbReference type="GO" id="GO:0005829">
    <property type="term" value="C:cytosol"/>
    <property type="evidence" value="ECO:0007669"/>
    <property type="project" value="TreeGrafter"/>
</dbReference>
<dbReference type="GO" id="GO:0004372">
    <property type="term" value="F:glycine hydroxymethyltransferase activity"/>
    <property type="evidence" value="ECO:0007669"/>
    <property type="project" value="UniProtKB-UniRule"/>
</dbReference>
<dbReference type="GO" id="GO:0030170">
    <property type="term" value="F:pyridoxal phosphate binding"/>
    <property type="evidence" value="ECO:0007669"/>
    <property type="project" value="UniProtKB-UniRule"/>
</dbReference>
<dbReference type="GO" id="GO:0019264">
    <property type="term" value="P:glycine biosynthetic process from serine"/>
    <property type="evidence" value="ECO:0007669"/>
    <property type="project" value="UniProtKB-UniRule"/>
</dbReference>
<dbReference type="GO" id="GO:0035999">
    <property type="term" value="P:tetrahydrofolate interconversion"/>
    <property type="evidence" value="ECO:0007669"/>
    <property type="project" value="UniProtKB-UniRule"/>
</dbReference>
<dbReference type="CDD" id="cd00378">
    <property type="entry name" value="SHMT"/>
    <property type="match status" value="1"/>
</dbReference>
<dbReference type="FunFam" id="3.40.640.10:FF:000001">
    <property type="entry name" value="Serine hydroxymethyltransferase"/>
    <property type="match status" value="1"/>
</dbReference>
<dbReference type="Gene3D" id="3.90.1150.10">
    <property type="entry name" value="Aspartate Aminotransferase, domain 1"/>
    <property type="match status" value="1"/>
</dbReference>
<dbReference type="Gene3D" id="3.40.640.10">
    <property type="entry name" value="Type I PLP-dependent aspartate aminotransferase-like (Major domain)"/>
    <property type="match status" value="1"/>
</dbReference>
<dbReference type="HAMAP" id="MF_00051">
    <property type="entry name" value="SHMT"/>
    <property type="match status" value="1"/>
</dbReference>
<dbReference type="InterPro" id="IPR015424">
    <property type="entry name" value="PyrdxlP-dep_Trfase"/>
</dbReference>
<dbReference type="InterPro" id="IPR015421">
    <property type="entry name" value="PyrdxlP-dep_Trfase_major"/>
</dbReference>
<dbReference type="InterPro" id="IPR015422">
    <property type="entry name" value="PyrdxlP-dep_Trfase_small"/>
</dbReference>
<dbReference type="InterPro" id="IPR001085">
    <property type="entry name" value="Ser_HO-MeTrfase"/>
</dbReference>
<dbReference type="InterPro" id="IPR049943">
    <property type="entry name" value="Ser_HO-MeTrfase-like"/>
</dbReference>
<dbReference type="InterPro" id="IPR019798">
    <property type="entry name" value="Ser_HO-MeTrfase_PLP_BS"/>
</dbReference>
<dbReference type="InterPro" id="IPR039429">
    <property type="entry name" value="SHMT-like_dom"/>
</dbReference>
<dbReference type="NCBIfam" id="NF000586">
    <property type="entry name" value="PRK00011.1"/>
    <property type="match status" value="1"/>
</dbReference>
<dbReference type="PANTHER" id="PTHR11680">
    <property type="entry name" value="SERINE HYDROXYMETHYLTRANSFERASE"/>
    <property type="match status" value="1"/>
</dbReference>
<dbReference type="PANTHER" id="PTHR11680:SF50">
    <property type="entry name" value="SERINE HYDROXYMETHYLTRANSFERASE"/>
    <property type="match status" value="1"/>
</dbReference>
<dbReference type="Pfam" id="PF00464">
    <property type="entry name" value="SHMT"/>
    <property type="match status" value="1"/>
</dbReference>
<dbReference type="PIRSF" id="PIRSF000412">
    <property type="entry name" value="SHMT"/>
    <property type="match status" value="1"/>
</dbReference>
<dbReference type="SUPFAM" id="SSF53383">
    <property type="entry name" value="PLP-dependent transferases"/>
    <property type="match status" value="1"/>
</dbReference>
<dbReference type="PROSITE" id="PS00096">
    <property type="entry name" value="SHMT"/>
    <property type="match status" value="1"/>
</dbReference>
<protein>
    <recommendedName>
        <fullName evidence="1">Serine hydroxymethyltransferase</fullName>
        <shortName evidence="1">SHMT</shortName>
        <shortName evidence="1">Serine methylase</shortName>
        <ecNumber evidence="1">2.1.2.1</ecNumber>
    </recommendedName>
</protein>
<name>GLYA_ACIF2</name>
<keyword id="KW-0028">Amino-acid biosynthesis</keyword>
<keyword id="KW-0963">Cytoplasm</keyword>
<keyword id="KW-0554">One-carbon metabolism</keyword>
<keyword id="KW-0663">Pyridoxal phosphate</keyword>
<keyword id="KW-1185">Reference proteome</keyword>
<keyword id="KW-0808">Transferase</keyword>
<gene>
    <name evidence="1" type="primary">glyA</name>
    <name type="ordered locus">AFE_0295</name>
</gene>
<evidence type="ECO:0000255" key="1">
    <source>
        <dbReference type="HAMAP-Rule" id="MF_00051"/>
    </source>
</evidence>